<reference key="1">
    <citation type="journal article" date="1985" name="J. Biol. Chem.">
        <title>The complete nucleotide sequences of the Escherichia coli LIV-BP and LS-BP genes. Implications for the mechanism of high-affinity branched-chain amino acid transport.</title>
        <authorList>
            <person name="Landick R."/>
            <person name="Oxender D.L."/>
        </authorList>
    </citation>
    <scope>NUCLEOTIDE SEQUENCE [GENOMIC DNA]</scope>
    <source>
        <strain>K12 / W3110 / ATCC 27325 / DSM 5911</strain>
    </source>
</reference>
<reference key="2">
    <citation type="journal article" date="1985" name="J. Cell. Biochem.">
        <title>The leucine binding proteins of Escherichia coli as models for studying the relationships between protein structure and function.</title>
        <authorList>
            <person name="Antonucci T.K."/>
            <person name="Landick R."/>
            <person name="Oxender D.L."/>
        </authorList>
    </citation>
    <scope>NUCLEOTIDE SEQUENCE [GENOMIC DNA]</scope>
</reference>
<reference key="3">
    <citation type="journal article" date="1990" name="J. Biol. Chem.">
        <title>Nucleotide sequence and genetic characterization reveal six essential genes for the LIV-I and LS transport systems of Escherichia coli.</title>
        <authorList>
            <person name="Adams M.D."/>
            <person name="Wagner L.M."/>
            <person name="Graddis T.J."/>
            <person name="Landick R."/>
            <person name="Antonucci T.K."/>
            <person name="Gibson A.L."/>
            <person name="Oxender D.L."/>
        </authorList>
    </citation>
    <scope>NUCLEOTIDE SEQUENCE [GENOMIC DNA]</scope>
</reference>
<reference key="4">
    <citation type="journal article" date="1994" name="Nucleic Acids Res.">
        <title>Analysis of the Escherichia coli genome. V. DNA sequence of the region from 76.0 to 81.5 minutes.</title>
        <authorList>
            <person name="Sofia H.J."/>
            <person name="Burland V."/>
            <person name="Daniels D.L."/>
            <person name="Plunkett G. III"/>
            <person name="Blattner F.R."/>
        </authorList>
    </citation>
    <scope>NUCLEOTIDE SEQUENCE [LARGE SCALE GENOMIC DNA]</scope>
    <source>
        <strain>K12 / MG1655 / ATCC 47076</strain>
    </source>
</reference>
<reference key="5">
    <citation type="journal article" date="1997" name="Science">
        <title>The complete genome sequence of Escherichia coli K-12.</title>
        <authorList>
            <person name="Blattner F.R."/>
            <person name="Plunkett G. III"/>
            <person name="Bloch C.A."/>
            <person name="Perna N.T."/>
            <person name="Burland V."/>
            <person name="Riley M."/>
            <person name="Collado-Vides J."/>
            <person name="Glasner J.D."/>
            <person name="Rode C.K."/>
            <person name="Mayhew G.F."/>
            <person name="Gregor J."/>
            <person name="Davis N.W."/>
            <person name="Kirkpatrick H.A."/>
            <person name="Goeden M.A."/>
            <person name="Rose D.J."/>
            <person name="Mau B."/>
            <person name="Shao Y."/>
        </authorList>
    </citation>
    <scope>NUCLEOTIDE SEQUENCE [LARGE SCALE GENOMIC DNA]</scope>
    <source>
        <strain>K12 / MG1655 / ATCC 47076</strain>
    </source>
</reference>
<reference key="6">
    <citation type="journal article" date="2006" name="Mol. Syst. Biol.">
        <title>Highly accurate genome sequences of Escherichia coli K-12 strains MG1655 and W3110.</title>
        <authorList>
            <person name="Hayashi K."/>
            <person name="Morooka N."/>
            <person name="Yamamoto Y."/>
            <person name="Fujita K."/>
            <person name="Isono K."/>
            <person name="Choi S."/>
            <person name="Ohtsubo E."/>
            <person name="Baba T."/>
            <person name="Wanner B.L."/>
            <person name="Mori H."/>
            <person name="Horiuchi T."/>
        </authorList>
    </citation>
    <scope>NUCLEOTIDE SEQUENCE [LARGE SCALE GENOMIC DNA]</scope>
    <source>
        <strain>K12 / W3110 / ATCC 27325 / DSM 5911</strain>
    </source>
</reference>
<reference key="7">
    <citation type="journal article" date="1977" name="FEBS Lett.">
        <title>The primary structure of a Leu, Ile and Val (LIV)-binding protein from Escherichia coli.</title>
        <authorList>
            <person name="Ovchinnikov Y.A."/>
            <person name="Aldanova N.A."/>
            <person name="Grinkevich V.A."/>
            <person name="Arzamazova N.M."/>
            <person name="Moroz I.N."/>
        </authorList>
    </citation>
    <scope>PROTEIN SEQUENCE OF 24-367</scope>
    <source>
        <strain>K12</strain>
    </source>
</reference>
<reference key="8">
    <citation type="journal article" date="1997" name="Electrophoresis">
        <title>Comparing the predicted and observed properties of proteins encoded in the genome of Escherichia coli K-12.</title>
        <authorList>
            <person name="Link A.J."/>
            <person name="Robison K."/>
            <person name="Church G.M."/>
        </authorList>
    </citation>
    <scope>PROTEIN SEQUENCE OF 24-35</scope>
    <source>
        <strain>K12 / EMG2</strain>
    </source>
</reference>
<reference key="9">
    <citation type="submission" date="1996-02" db="UniProtKB">
        <authorList>
            <person name="Frutiger S."/>
            <person name="Hughes G.J."/>
            <person name="Pasquali C."/>
            <person name="Hochstrasser D.F."/>
        </authorList>
    </citation>
    <scope>PROTEIN SEQUENCE OF 24-35</scope>
    <source>
        <strain>K12 / W3110 / ATCC 27325 / DSM 5911</strain>
    </source>
</reference>
<reference key="10">
    <citation type="journal article" date="1997" name="Electrophoresis">
        <title>Escherichia coli proteome analysis using the gene-protein database.</title>
        <authorList>
            <person name="VanBogelen R.A."/>
            <person name="Abshire K.Z."/>
            <person name="Moldover B."/>
            <person name="Olson E.R."/>
            <person name="Neidhardt F.C."/>
        </authorList>
    </citation>
    <scope>IDENTIFICATION BY 2D-GEL</scope>
</reference>
<reference key="11">
    <citation type="journal article" date="1989" name="J. Mol. Biol.">
        <title>Periplasmic binding protein structure and function. Refined X-ray structures of the leucine/isoleucine/valine-binding protein and its complex with leucine.</title>
        <authorList>
            <person name="Sack J.S."/>
            <person name="Saper M.A."/>
            <person name="Quiocho F.A."/>
        </authorList>
    </citation>
    <scope>X-RAY CRYSTALLOGRAPHY (2.4 ANGSTROMS)</scope>
</reference>
<feature type="signal peptide" evidence="1 2 3">
    <location>
        <begin position="1"/>
        <end position="23"/>
    </location>
</feature>
<feature type="chain" id="PRO_0000017700" description="Leu/Ile/Val-binding protein">
    <location>
        <begin position="24"/>
        <end position="367"/>
    </location>
</feature>
<feature type="disulfide bond">
    <location>
        <begin position="76"/>
        <end position="101"/>
    </location>
</feature>
<feature type="sequence conflict" description="In Ref. 1, 2 and 3." evidence="4" ref="1 2 3">
    <original>I</original>
    <variation>T</variation>
    <location>
        <position position="3"/>
    </location>
</feature>
<feature type="sequence conflict" description="In Ref. 1, 2 and 3." evidence="4" ref="1 2 3">
    <original>C</original>
    <variation>L</variation>
    <location>
        <position position="12"/>
    </location>
</feature>
<feature type="sequence conflict" description="In Ref. 1." evidence="4" ref="1">
    <original>A</original>
    <variation>G</variation>
    <location>
        <position position="16"/>
    </location>
</feature>
<feature type="sequence conflict" description="In Ref. 1, 2, 3 and 7." evidence="4" ref="1 2 3 7">
    <original>V</original>
    <variation>A</variation>
    <location>
        <position position="70"/>
    </location>
</feature>
<feature type="strand" evidence="5">
    <location>
        <begin position="26"/>
        <end position="32"/>
    </location>
</feature>
<feature type="strand" evidence="5">
    <location>
        <begin position="34"/>
        <end position="36"/>
    </location>
</feature>
<feature type="helix" evidence="6">
    <location>
        <begin position="39"/>
        <end position="58"/>
    </location>
</feature>
<feature type="turn" evidence="6">
    <location>
        <begin position="59"/>
        <end position="61"/>
    </location>
</feature>
<feature type="strand" evidence="6">
    <location>
        <begin position="67"/>
        <end position="73"/>
    </location>
</feature>
<feature type="helix" evidence="6">
    <location>
        <begin position="78"/>
        <end position="90"/>
    </location>
</feature>
<feature type="strand" evidence="6">
    <location>
        <begin position="95"/>
        <end position="98"/>
    </location>
</feature>
<feature type="helix" evidence="6">
    <location>
        <begin position="102"/>
        <end position="115"/>
    </location>
</feature>
<feature type="strand" evidence="6">
    <location>
        <begin position="118"/>
        <end position="123"/>
    </location>
</feature>
<feature type="helix" evidence="6">
    <location>
        <begin position="127"/>
        <end position="130"/>
    </location>
</feature>
<feature type="strand" evidence="6">
    <location>
        <begin position="135"/>
        <end position="141"/>
    </location>
</feature>
<feature type="helix" evidence="6">
    <location>
        <begin position="144"/>
        <end position="157"/>
    </location>
</feature>
<feature type="strand" evidence="6">
    <location>
        <begin position="162"/>
        <end position="168"/>
    </location>
</feature>
<feature type="helix" evidence="6">
    <location>
        <begin position="172"/>
        <end position="187"/>
    </location>
</feature>
<feature type="strand" evidence="6">
    <location>
        <begin position="192"/>
        <end position="197"/>
    </location>
</feature>
<feature type="helix" evidence="6">
    <location>
        <begin position="206"/>
        <end position="214"/>
    </location>
</feature>
<feature type="strand" evidence="6">
    <location>
        <begin position="219"/>
        <end position="224"/>
    </location>
</feature>
<feature type="helix" evidence="6">
    <location>
        <begin position="226"/>
        <end position="238"/>
    </location>
</feature>
<feature type="strand" evidence="6">
    <location>
        <begin position="244"/>
        <end position="247"/>
    </location>
</feature>
<feature type="helix" evidence="6">
    <location>
        <begin position="249"/>
        <end position="251"/>
    </location>
</feature>
<feature type="helix" evidence="6">
    <location>
        <begin position="254"/>
        <end position="260"/>
    </location>
</feature>
<feature type="helix" evidence="6">
    <location>
        <begin position="261"/>
        <end position="264"/>
    </location>
</feature>
<feature type="strand" evidence="6">
    <location>
        <begin position="268"/>
        <end position="271"/>
    </location>
</feature>
<feature type="helix" evidence="6">
    <location>
        <begin position="275"/>
        <end position="277"/>
    </location>
</feature>
<feature type="helix" evidence="6">
    <location>
        <begin position="279"/>
        <end position="281"/>
    </location>
</feature>
<feature type="helix" evidence="6">
    <location>
        <begin position="282"/>
        <end position="290"/>
    </location>
</feature>
<feature type="helix" evidence="6">
    <location>
        <begin position="298"/>
        <end position="314"/>
    </location>
</feature>
<feature type="helix" evidence="6">
    <location>
        <begin position="320"/>
        <end position="329"/>
    </location>
</feature>
<feature type="strand" evidence="6">
    <location>
        <begin position="332"/>
        <end position="334"/>
    </location>
</feature>
<feature type="strand" evidence="6">
    <location>
        <begin position="337"/>
        <end position="339"/>
    </location>
</feature>
<feature type="strand" evidence="5">
    <location>
        <begin position="347"/>
        <end position="349"/>
    </location>
</feature>
<feature type="strand" evidence="6">
    <location>
        <begin position="353"/>
        <end position="357"/>
    </location>
</feature>
<feature type="strand" evidence="6">
    <location>
        <begin position="363"/>
        <end position="365"/>
    </location>
</feature>
<evidence type="ECO:0000269" key="1">
    <source>
    </source>
</evidence>
<evidence type="ECO:0000269" key="2">
    <source>
    </source>
</evidence>
<evidence type="ECO:0000269" key="3">
    <source ref="9"/>
</evidence>
<evidence type="ECO:0000305" key="4"/>
<evidence type="ECO:0007829" key="5">
    <source>
        <dbReference type="PDB" id="1Z15"/>
    </source>
</evidence>
<evidence type="ECO:0007829" key="6">
    <source>
        <dbReference type="PDB" id="9JTI"/>
    </source>
</evidence>
<name>LIVJ_ECOLI</name>
<proteinExistence type="evidence at protein level"/>
<organism>
    <name type="scientific">Escherichia coli (strain K12)</name>
    <dbReference type="NCBI Taxonomy" id="83333"/>
    <lineage>
        <taxon>Bacteria</taxon>
        <taxon>Pseudomonadati</taxon>
        <taxon>Pseudomonadota</taxon>
        <taxon>Gammaproteobacteria</taxon>
        <taxon>Enterobacterales</taxon>
        <taxon>Enterobacteriaceae</taxon>
        <taxon>Escherichia</taxon>
    </lineage>
</organism>
<accession>P0AD96</accession>
<accession>P02917</accession>
<accession>P76698</accession>
<accession>Q2M7C3</accession>
<accession>Q8CVL7</accession>
<accession>Q8X6S2</accession>
<sequence>MNIKGKALLAGCIALAFSNMALAEDIKVAVVGAMSGPVAQYGDQEFTGAEQAVADINAKGGIKGNKLQIVKYDDACDPKQAVAVANKVVNDGIKYVIGHLCSSSTQPASDIYEDEGILMITPAATAPELTARGYQLILRTTGLDSDQGPTAAKYILEKVKPQRIAIVHDKQQYGEGLARAVQDGLKKGNANVVFFDGITAGEKDFSTLVARLKKENIDFVYYGGYHPEMGQILRQARAAGLKTQFMGPEGVANVSLSNIAGESAEGLLVTKPKNYDQVPANKPIVDAIKAKKQDPSGAFVWTTYAALQSLQAGLNQSDDPAEIAKYLKANSVDTVMGPLTWDEKGDLKGFEFGVFDWHANGTATDAK</sequence>
<gene>
    <name type="primary">livJ</name>
    <name type="ordered locus">b3460</name>
    <name type="ordered locus">JW3425</name>
</gene>
<dbReference type="EMBL" id="J05516">
    <property type="protein sequence ID" value="AAA83881.1"/>
    <property type="molecule type" value="Genomic_DNA"/>
</dbReference>
<dbReference type="EMBL" id="M29377">
    <property type="protein sequence ID" value="AAA24075.1"/>
    <property type="molecule type" value="Genomic_DNA"/>
</dbReference>
<dbReference type="EMBL" id="U00039">
    <property type="protein sequence ID" value="AAB18435.1"/>
    <property type="status" value="ALT_INIT"/>
    <property type="molecule type" value="Genomic_DNA"/>
</dbReference>
<dbReference type="EMBL" id="U00096">
    <property type="protein sequence ID" value="AAT48185.1"/>
    <property type="molecule type" value="Genomic_DNA"/>
</dbReference>
<dbReference type="EMBL" id="AP009048">
    <property type="protein sequence ID" value="BAE77833.1"/>
    <property type="molecule type" value="Genomic_DNA"/>
</dbReference>
<dbReference type="PIR" id="G65142">
    <property type="entry name" value="BLEC"/>
</dbReference>
<dbReference type="RefSeq" id="WP_001021996.1">
    <property type="nucleotide sequence ID" value="NZ_SSZK01000008.1"/>
</dbReference>
<dbReference type="RefSeq" id="YP_026223.1">
    <property type="nucleotide sequence ID" value="NC_000913.3"/>
</dbReference>
<dbReference type="PDB" id="1Z15">
    <property type="method" value="X-ray"/>
    <property type="resolution" value="1.70 A"/>
    <property type="chains" value="A=24-367"/>
</dbReference>
<dbReference type="PDB" id="1Z16">
    <property type="method" value="X-ray"/>
    <property type="resolution" value="1.72 A"/>
    <property type="chains" value="A=24-367"/>
</dbReference>
<dbReference type="PDB" id="1Z17">
    <property type="method" value="X-ray"/>
    <property type="resolution" value="1.96 A"/>
    <property type="chains" value="A=24-367"/>
</dbReference>
<dbReference type="PDB" id="1Z18">
    <property type="method" value="X-ray"/>
    <property type="resolution" value="2.10 A"/>
    <property type="chains" value="A=24-367"/>
</dbReference>
<dbReference type="PDB" id="2LIV">
    <property type="method" value="X-ray"/>
    <property type="resolution" value="2.40 A"/>
    <property type="chains" value="A=24-367"/>
</dbReference>
<dbReference type="PDB" id="9JTI">
    <property type="method" value="X-ray"/>
    <property type="resolution" value="1.62 A"/>
    <property type="chains" value="A=36-367"/>
</dbReference>
<dbReference type="PDBsum" id="1Z15"/>
<dbReference type="PDBsum" id="1Z16"/>
<dbReference type="PDBsum" id="1Z17"/>
<dbReference type="PDBsum" id="1Z18"/>
<dbReference type="PDBsum" id="2LIV"/>
<dbReference type="PDBsum" id="9JTI"/>
<dbReference type="SMR" id="P0AD96"/>
<dbReference type="BioGRID" id="4259328">
    <property type="interactions" value="29"/>
</dbReference>
<dbReference type="ComplexPortal" id="CPX-4316">
    <property type="entry name" value="Branched chain amino acid ABC transporter complex"/>
</dbReference>
<dbReference type="FunCoup" id="P0AD96">
    <property type="interactions" value="374"/>
</dbReference>
<dbReference type="IntAct" id="P0AD96">
    <property type="interactions" value="4"/>
</dbReference>
<dbReference type="STRING" id="511145.b3460"/>
<dbReference type="TCDB" id="3.A.1.4.1">
    <property type="family name" value="the atp-binding cassette (abc) superfamily"/>
</dbReference>
<dbReference type="jPOST" id="P0AD96"/>
<dbReference type="PaxDb" id="511145-b3460"/>
<dbReference type="EnsemblBacteria" id="AAT48185">
    <property type="protein sequence ID" value="AAT48185"/>
    <property type="gene ID" value="b3460"/>
</dbReference>
<dbReference type="GeneID" id="93778531"/>
<dbReference type="GeneID" id="947971"/>
<dbReference type="KEGG" id="ecj:JW3425"/>
<dbReference type="KEGG" id="eco:b3460"/>
<dbReference type="PATRIC" id="fig|511145.12.peg.3559"/>
<dbReference type="EchoBASE" id="EB0534"/>
<dbReference type="eggNOG" id="COG0683">
    <property type="taxonomic scope" value="Bacteria"/>
</dbReference>
<dbReference type="HOGENOM" id="CLU_027128_6_0_6"/>
<dbReference type="InParanoid" id="P0AD96"/>
<dbReference type="OMA" id="MEFTGAR"/>
<dbReference type="OrthoDB" id="9768386at2"/>
<dbReference type="PhylomeDB" id="P0AD96"/>
<dbReference type="BioCyc" id="EcoCyc:LIVJ-MONOMER"/>
<dbReference type="BioCyc" id="MetaCyc:LIVJ-MONOMER"/>
<dbReference type="EvolutionaryTrace" id="P0AD96"/>
<dbReference type="PRO" id="PR:P0AD96"/>
<dbReference type="Proteomes" id="UP000000625">
    <property type="component" value="Chromosome"/>
</dbReference>
<dbReference type="GO" id="GO:0055052">
    <property type="term" value="C:ATP-binding cassette (ABC) transporter complex, substrate-binding subunit-containing"/>
    <property type="evidence" value="ECO:0000303"/>
    <property type="project" value="ComplexPortal"/>
</dbReference>
<dbReference type="GO" id="GO:0016020">
    <property type="term" value="C:membrane"/>
    <property type="evidence" value="ECO:0000303"/>
    <property type="project" value="ComplexPortal"/>
</dbReference>
<dbReference type="GO" id="GO:0030288">
    <property type="term" value="C:outer membrane-bounded periplasmic space"/>
    <property type="evidence" value="ECO:0000314"/>
    <property type="project" value="EcoCyc"/>
</dbReference>
<dbReference type="GO" id="GO:0015803">
    <property type="term" value="P:branched-chain amino acid transport"/>
    <property type="evidence" value="ECO:0000269"/>
    <property type="project" value="EcoCyc"/>
</dbReference>
<dbReference type="GO" id="GO:0015818">
    <property type="term" value="P:isoleucine transport"/>
    <property type="evidence" value="ECO:0000315"/>
    <property type="project" value="EcoCyc"/>
</dbReference>
<dbReference type="GO" id="GO:0015820">
    <property type="term" value="P:L-leucine transport"/>
    <property type="evidence" value="ECO:0000315"/>
    <property type="project" value="EcoCyc"/>
</dbReference>
<dbReference type="GO" id="GO:0015829">
    <property type="term" value="P:valine transport"/>
    <property type="evidence" value="ECO:0000315"/>
    <property type="project" value="EcoCyc"/>
</dbReference>
<dbReference type="CDD" id="cd06342">
    <property type="entry name" value="PBP1_ABC_LIVBP-like"/>
    <property type="match status" value="1"/>
</dbReference>
<dbReference type="FunFam" id="3.40.50.2300:FF:000033">
    <property type="entry name" value="Amino acid ABC transporter substrate-binding protein"/>
    <property type="match status" value="1"/>
</dbReference>
<dbReference type="Gene3D" id="3.40.50.2300">
    <property type="match status" value="2"/>
</dbReference>
<dbReference type="InterPro" id="IPR028081">
    <property type="entry name" value="Leu-bd"/>
</dbReference>
<dbReference type="InterPro" id="IPR000709">
    <property type="entry name" value="Leu_Ile_Val-bd"/>
</dbReference>
<dbReference type="InterPro" id="IPR028082">
    <property type="entry name" value="Peripla_BP_I"/>
</dbReference>
<dbReference type="NCBIfam" id="NF011933">
    <property type="entry name" value="PRK15404.1"/>
    <property type="match status" value="1"/>
</dbReference>
<dbReference type="PANTHER" id="PTHR47151">
    <property type="entry name" value="LEU/ILE/VAL-BINDING ABC TRANSPORTER SUBUNIT"/>
    <property type="match status" value="1"/>
</dbReference>
<dbReference type="PANTHER" id="PTHR47151:SF1">
    <property type="entry name" value="LEU_ILE_VAL-BINDING PROTEIN"/>
    <property type="match status" value="1"/>
</dbReference>
<dbReference type="Pfam" id="PF13458">
    <property type="entry name" value="Peripla_BP_6"/>
    <property type="match status" value="1"/>
</dbReference>
<dbReference type="PRINTS" id="PR00337">
    <property type="entry name" value="LEUILEVALBP"/>
</dbReference>
<dbReference type="SUPFAM" id="SSF53822">
    <property type="entry name" value="Periplasmic binding protein-like I"/>
    <property type="match status" value="1"/>
</dbReference>
<keyword id="KW-0002">3D-structure</keyword>
<keyword id="KW-0029">Amino-acid transport</keyword>
<keyword id="KW-0903">Direct protein sequencing</keyword>
<keyword id="KW-1015">Disulfide bond</keyword>
<keyword id="KW-0574">Periplasm</keyword>
<keyword id="KW-1185">Reference proteome</keyword>
<keyword id="KW-0732">Signal</keyword>
<keyword id="KW-0813">Transport</keyword>
<comment type="function">
    <text>This protein is a component of the leucine, isoleucine, valine, (threonine) transport system, which is one of the two periplasmic binding protein-dependent transport systems of the high-affinity transport of the branched-chain amino acids.</text>
</comment>
<comment type="subcellular location">
    <subcellularLocation>
        <location>Periplasm</location>
    </subcellularLocation>
</comment>
<comment type="similarity">
    <text evidence="4">Belongs to the leucine-binding protein family.</text>
</comment>
<comment type="sequence caution" evidence="4">
    <conflict type="erroneous initiation">
        <sequence resource="EMBL-CDS" id="AAB18435"/>
    </conflict>
</comment>
<protein>
    <recommendedName>
        <fullName>Leu/Ile/Val-binding protein</fullName>
        <shortName>LIV-BP</shortName>
    </recommendedName>
</protein>